<reference key="1">
    <citation type="journal article" date="1993" name="Immunology">
        <title>The sheep analogue of human CD59: purification and characterization of its complement inhibitory activity.</title>
        <authorList>
            <person name="van den Berg C.W."/>
            <person name="Harrison R.A."/>
            <person name="Morgan B.P."/>
        </authorList>
    </citation>
    <scope>PROTEIN SEQUENCE</scope>
    <scope>TISSUE SPECIFICITY</scope>
    <source>
        <tissue>Erythrocyte</tissue>
    </source>
</reference>
<comment type="function">
    <text evidence="1">Potent inhibitor of the complement membrane attack complex (MAC) action, which protects self-cells from damage during complement activation. Acts by binding to the beta-haipins of C8 (C8A and C8B) components of the assembling MAC, forming an intermolecular beta-sheet that prevents incorporation of the multiple copies of C9 required for complete formation of the osmolytic pore.</text>
</comment>
<comment type="subunit">
    <text evidence="1">Interacts with T-cell surface antigen CD2.</text>
</comment>
<comment type="subcellular location">
    <subcellularLocation>
        <location evidence="1">Cell membrane</location>
        <topology evidence="1">Lipid-anchor</topology>
        <topology evidence="1">GPI-anchor</topology>
    </subcellularLocation>
    <subcellularLocation>
        <location evidence="1">Secreted</location>
    </subcellularLocation>
    <text evidence="1">Localizes to the cell surface. Soluble form found in a number of tissues.</text>
</comment>
<comment type="tissue specificity">
    <text evidence="2">Expressed in erythrocytes and lymphocytes. Not detected in platelets.</text>
</comment>
<comment type="PTM">
    <text evidence="1">N- and O-glycosylated.</text>
</comment>
<evidence type="ECO:0000250" key="1">
    <source>
        <dbReference type="UniProtKB" id="P13987"/>
    </source>
</evidence>
<evidence type="ECO:0000269" key="2">
    <source>
    </source>
</evidence>
<evidence type="ECO:0000303" key="3">
    <source>
    </source>
</evidence>
<evidence type="ECO:0000305" key="4"/>
<organism>
    <name type="scientific">Ovis aries</name>
    <name type="common">Sheep</name>
    <dbReference type="NCBI Taxonomy" id="9940"/>
    <lineage>
        <taxon>Eukaryota</taxon>
        <taxon>Metazoa</taxon>
        <taxon>Chordata</taxon>
        <taxon>Craniata</taxon>
        <taxon>Vertebrata</taxon>
        <taxon>Euteleostomi</taxon>
        <taxon>Mammalia</taxon>
        <taxon>Eutheria</taxon>
        <taxon>Laurasiatheria</taxon>
        <taxon>Artiodactyla</taxon>
        <taxon>Ruminantia</taxon>
        <taxon>Pecora</taxon>
        <taxon>Bovidae</taxon>
        <taxon>Caprinae</taxon>
        <taxon>Ovis</taxon>
    </lineage>
</organism>
<accession>P58020</accession>
<accession>Q9TRH4</accession>
<feature type="chain" id="PRO_0000187085" description="CD59 glycoprotein">
    <location>
        <begin position="1" status="less than"/>
        <end position="27" status="greater than"/>
    </location>
</feature>
<feature type="glycosylation site" description="N-linked (GlcNAc...) asparagine" evidence="4">
    <location>
        <position position="17"/>
    </location>
</feature>
<feature type="disulfide bond" evidence="1">
    <location>
        <begin position="3"/>
        <end position="25"/>
    </location>
</feature>
<feature type="disulfide bond" evidence="1">
    <location>
        <begin position="6"/>
        <end position="12"/>
    </location>
</feature>
<feature type="unsure residue" description="Assigned by comparison with orthologs">
    <location>
        <position position="3"/>
    </location>
</feature>
<feature type="unsure residue" description="Assigned by comparison with orthologs">
    <location>
        <position position="6"/>
    </location>
</feature>
<feature type="unsure residue" description="Assigned by comparison with orthologs">
    <location>
        <position position="17"/>
    </location>
</feature>
<feature type="unsure residue" description="Assigned by comparison with orthologs">
    <location>
        <position position="18"/>
    </location>
</feature>
<feature type="unsure residue" description="Assigned by comparison with orthologs">
    <location>
        <position position="25"/>
    </location>
</feature>
<feature type="non-terminal residue">
    <location>
        <position position="1"/>
    </location>
</feature>
<feature type="non-terminal residue">
    <location>
        <position position="27"/>
    </location>
</feature>
<name>CD59_SHEEP</name>
<proteinExistence type="evidence at protein level"/>
<gene>
    <name evidence="3" type="primary">CD59</name>
</gene>
<protein>
    <recommendedName>
        <fullName>CD59 glycoprotein</fullName>
    </recommendedName>
    <alternativeName>
        <fullName>Complement inhibitory protein</fullName>
        <shortName>CIP</shortName>
    </alternativeName>
    <alternativeName>
        <fullName>MAC-inhibitory protein</fullName>
        <shortName>MAC-IP</shortName>
    </alternativeName>
    <alternativeName>
        <fullName>Membrane attack complex inhibition factor</fullName>
        <shortName>MACIF</shortName>
    </alternativeName>
    <alternativeName>
        <fullName>Protectin</fullName>
    </alternativeName>
    <cdAntigenName>CD59</cdAntigenName>
</protein>
<keyword id="KW-1003">Cell membrane</keyword>
<keyword id="KW-0903">Direct protein sequencing</keyword>
<keyword id="KW-1015">Disulfide bond</keyword>
<keyword id="KW-0325">Glycoprotein</keyword>
<keyword id="KW-0336">GPI-anchor</keyword>
<keyword id="KW-0449">Lipoprotein</keyword>
<keyword id="KW-0472">Membrane</keyword>
<keyword id="KW-1185">Reference proteome</keyword>
<keyword id="KW-0964">Secreted</keyword>
<dbReference type="STRING" id="9940.ENSOARP00000019219"/>
<dbReference type="GlyCosmos" id="P58020">
    <property type="glycosylation" value="1 site, No reported glycans"/>
</dbReference>
<dbReference type="PaxDb" id="9940-ENSOARP00000019219"/>
<dbReference type="eggNOG" id="ENOG502SA4P">
    <property type="taxonomic scope" value="Eukaryota"/>
</dbReference>
<dbReference type="Proteomes" id="UP000002356">
    <property type="component" value="Unplaced"/>
</dbReference>
<dbReference type="GO" id="GO:0005886">
    <property type="term" value="C:plasma membrane"/>
    <property type="evidence" value="ECO:0007669"/>
    <property type="project" value="UniProtKB-SubCell"/>
</dbReference>
<dbReference type="GO" id="GO:0098552">
    <property type="term" value="C:side of membrane"/>
    <property type="evidence" value="ECO:0007669"/>
    <property type="project" value="UniProtKB-KW"/>
</dbReference>
<dbReference type="InterPro" id="IPR045860">
    <property type="entry name" value="Snake_toxin-like_sf"/>
</dbReference>
<dbReference type="SUPFAM" id="SSF57302">
    <property type="entry name" value="Snake toxin-like"/>
    <property type="match status" value="1"/>
</dbReference>
<sequence length="27" mass="3027">LQCYSCINQVDCTSVINCTXNQDACLY</sequence>